<reference key="1">
    <citation type="journal article" date="2014" name="Stand. Genomic Sci.">
        <title>Complete genome sequence of Anabaena variabilis ATCC 29413.</title>
        <authorList>
            <person name="Thiel T."/>
            <person name="Pratte B.S."/>
            <person name="Zhong J."/>
            <person name="Goodwin L."/>
            <person name="Copeland A."/>
            <person name="Lucas S."/>
            <person name="Han C."/>
            <person name="Pitluck S."/>
            <person name="Land M.L."/>
            <person name="Kyrpides N.C."/>
            <person name="Woyke T."/>
        </authorList>
    </citation>
    <scope>NUCLEOTIDE SEQUENCE [LARGE SCALE GENOMIC DNA]</scope>
    <source>
        <strain>ATCC 29413 / PCC 7937</strain>
    </source>
</reference>
<comment type="function">
    <text evidence="2">Involved in base excision repair of DNA damaged by oxidation or by mutagenic agents. Acts as a DNA glycosylase that recognizes and removes damaged bases. Has a preference for oxidized purines, such as 7,8-dihydro-8-oxoguanine (8-oxoG). Has AP (apurinic/apyrimidinic) lyase activity and introduces nicks in the DNA strand. Cleaves the DNA backbone by beta-delta elimination to generate a single-strand break at the site of the removed base with both 3'- and 5'-phosphates.</text>
</comment>
<comment type="catalytic activity">
    <reaction evidence="2">
        <text>Hydrolysis of DNA containing ring-opened 7-methylguanine residues, releasing 2,6-diamino-4-hydroxy-5-(N-methyl)formamidopyrimidine.</text>
        <dbReference type="EC" id="3.2.2.23"/>
    </reaction>
</comment>
<comment type="catalytic activity">
    <reaction evidence="2">
        <text>2'-deoxyribonucleotide-(2'-deoxyribose 5'-phosphate)-2'-deoxyribonucleotide-DNA = a 3'-end 2'-deoxyribonucleotide-(2,3-dehydro-2,3-deoxyribose 5'-phosphate)-DNA + a 5'-end 5'-phospho-2'-deoxyribonucleoside-DNA + H(+)</text>
        <dbReference type="Rhea" id="RHEA:66592"/>
        <dbReference type="Rhea" id="RHEA-COMP:13180"/>
        <dbReference type="Rhea" id="RHEA-COMP:16897"/>
        <dbReference type="Rhea" id="RHEA-COMP:17067"/>
        <dbReference type="ChEBI" id="CHEBI:15378"/>
        <dbReference type="ChEBI" id="CHEBI:136412"/>
        <dbReference type="ChEBI" id="CHEBI:157695"/>
        <dbReference type="ChEBI" id="CHEBI:167181"/>
        <dbReference type="EC" id="4.2.99.18"/>
    </reaction>
</comment>
<comment type="cofactor">
    <cofactor evidence="2">
        <name>Zn(2+)</name>
        <dbReference type="ChEBI" id="CHEBI:29105"/>
    </cofactor>
    <text evidence="2">Binds 1 zinc ion per subunit.</text>
</comment>
<comment type="subunit">
    <text evidence="2">Monomer.</text>
</comment>
<comment type="similarity">
    <text evidence="2">Belongs to the FPG family.</text>
</comment>
<feature type="initiator methionine" description="Removed" evidence="1">
    <location>
        <position position="1"/>
    </location>
</feature>
<feature type="chain" id="PRO_1000008674" description="Formamidopyrimidine-DNA glycosylase">
    <location>
        <begin position="2"/>
        <end position="277"/>
    </location>
</feature>
<feature type="zinc finger region" description="FPG-type" evidence="2">
    <location>
        <begin position="243"/>
        <end position="277"/>
    </location>
</feature>
<feature type="active site" description="Schiff-base intermediate with DNA" evidence="2">
    <location>
        <position position="2"/>
    </location>
</feature>
<feature type="active site" description="Proton donor" evidence="2">
    <location>
        <position position="3"/>
    </location>
</feature>
<feature type="active site" description="Proton donor; for beta-elimination activity" evidence="2">
    <location>
        <position position="60"/>
    </location>
</feature>
<feature type="active site" description="Proton donor; for delta-elimination activity" evidence="2">
    <location>
        <position position="267"/>
    </location>
</feature>
<feature type="binding site" evidence="2">
    <location>
        <position position="94"/>
    </location>
    <ligand>
        <name>DNA</name>
        <dbReference type="ChEBI" id="CHEBI:16991"/>
    </ligand>
</feature>
<feature type="binding site" evidence="2">
    <location>
        <position position="113"/>
    </location>
    <ligand>
        <name>DNA</name>
        <dbReference type="ChEBI" id="CHEBI:16991"/>
    </ligand>
</feature>
<feature type="binding site" evidence="2">
    <location>
        <position position="158"/>
    </location>
    <ligand>
        <name>DNA</name>
        <dbReference type="ChEBI" id="CHEBI:16991"/>
    </ligand>
</feature>
<evidence type="ECO:0000250" key="1"/>
<evidence type="ECO:0000255" key="2">
    <source>
        <dbReference type="HAMAP-Rule" id="MF_00103"/>
    </source>
</evidence>
<gene>
    <name evidence="2" type="primary">mutM</name>
    <name evidence="2" type="synonym">fpg</name>
    <name type="ordered locus">Ava_1271</name>
</gene>
<name>FPG_TRIV2</name>
<keyword id="KW-0227">DNA damage</keyword>
<keyword id="KW-0234">DNA repair</keyword>
<keyword id="KW-0238">DNA-binding</keyword>
<keyword id="KW-0326">Glycosidase</keyword>
<keyword id="KW-0378">Hydrolase</keyword>
<keyword id="KW-0456">Lyase</keyword>
<keyword id="KW-0479">Metal-binding</keyword>
<keyword id="KW-0511">Multifunctional enzyme</keyword>
<keyword id="KW-0862">Zinc</keyword>
<keyword id="KW-0863">Zinc-finger</keyword>
<protein>
    <recommendedName>
        <fullName evidence="2">Formamidopyrimidine-DNA glycosylase</fullName>
        <shortName evidence="2">Fapy-DNA glycosylase</shortName>
        <ecNumber evidence="2">3.2.2.23</ecNumber>
    </recommendedName>
    <alternativeName>
        <fullName evidence="2">DNA-(apurinic or apyrimidinic site) lyase MutM</fullName>
        <shortName evidence="2">AP lyase MutM</shortName>
        <ecNumber evidence="2">4.2.99.18</ecNumber>
    </alternativeName>
</protein>
<sequence length="277" mass="30933">MPELPEVETVRRGLNQLTLNRKITGGDVLLHRTIAHPFSVGDFLNGITGDSISAWHRRGKYLLASTTSAAWLGVHLRMTGQLLWLNQDEPLHKHTRVRIFFEDQQELRFVDQRTFGQMWWVSSGMAVESVITGLAKLAVDPFSPEFTVEYLANKLHNRRRPIKTALLDQSVVAGLGNIYADEALFKSGVLPETLCTEVQLKQIELLRTAIIQVLETSIEAGGTTFSNFLNVKGVNGNYGGVAWVYNRAGEPCKVCGDVIQRIKLGGRSSHFCRQCQV</sequence>
<proteinExistence type="inferred from homology"/>
<organism>
    <name type="scientific">Trichormus variabilis (strain ATCC 29413 / PCC 7937)</name>
    <name type="common">Anabaena variabilis</name>
    <dbReference type="NCBI Taxonomy" id="240292"/>
    <lineage>
        <taxon>Bacteria</taxon>
        <taxon>Bacillati</taxon>
        <taxon>Cyanobacteriota</taxon>
        <taxon>Cyanophyceae</taxon>
        <taxon>Nostocales</taxon>
        <taxon>Nostocaceae</taxon>
        <taxon>Trichormus</taxon>
    </lineage>
</organism>
<accession>Q3MDP1</accession>
<dbReference type="EC" id="3.2.2.23" evidence="2"/>
<dbReference type="EC" id="4.2.99.18" evidence="2"/>
<dbReference type="EMBL" id="CP000117">
    <property type="protein sequence ID" value="ABA20895.1"/>
    <property type="molecule type" value="Genomic_DNA"/>
</dbReference>
<dbReference type="SMR" id="Q3MDP1"/>
<dbReference type="STRING" id="240292.Ava_1271"/>
<dbReference type="KEGG" id="ava:Ava_1271"/>
<dbReference type="eggNOG" id="COG0266">
    <property type="taxonomic scope" value="Bacteria"/>
</dbReference>
<dbReference type="HOGENOM" id="CLU_038423_1_2_3"/>
<dbReference type="Proteomes" id="UP000002533">
    <property type="component" value="Chromosome"/>
</dbReference>
<dbReference type="GO" id="GO:0034039">
    <property type="term" value="F:8-oxo-7,8-dihydroguanine DNA N-glycosylase activity"/>
    <property type="evidence" value="ECO:0007669"/>
    <property type="project" value="TreeGrafter"/>
</dbReference>
<dbReference type="GO" id="GO:0140078">
    <property type="term" value="F:class I DNA-(apurinic or apyrimidinic site) endonuclease activity"/>
    <property type="evidence" value="ECO:0007669"/>
    <property type="project" value="UniProtKB-EC"/>
</dbReference>
<dbReference type="GO" id="GO:0003684">
    <property type="term" value="F:damaged DNA binding"/>
    <property type="evidence" value="ECO:0007669"/>
    <property type="project" value="InterPro"/>
</dbReference>
<dbReference type="GO" id="GO:0008270">
    <property type="term" value="F:zinc ion binding"/>
    <property type="evidence" value="ECO:0007669"/>
    <property type="project" value="UniProtKB-UniRule"/>
</dbReference>
<dbReference type="GO" id="GO:0006284">
    <property type="term" value="P:base-excision repair"/>
    <property type="evidence" value="ECO:0007669"/>
    <property type="project" value="InterPro"/>
</dbReference>
<dbReference type="CDD" id="cd08966">
    <property type="entry name" value="EcFpg-like_N"/>
    <property type="match status" value="1"/>
</dbReference>
<dbReference type="FunFam" id="1.10.8.50:FF:000003">
    <property type="entry name" value="Formamidopyrimidine-DNA glycosylase"/>
    <property type="match status" value="1"/>
</dbReference>
<dbReference type="Gene3D" id="1.10.8.50">
    <property type="match status" value="1"/>
</dbReference>
<dbReference type="Gene3D" id="3.20.190.10">
    <property type="entry name" value="MutM-like, N-terminal"/>
    <property type="match status" value="1"/>
</dbReference>
<dbReference type="HAMAP" id="MF_00103">
    <property type="entry name" value="Fapy_DNA_glycosyl"/>
    <property type="match status" value="1"/>
</dbReference>
<dbReference type="InterPro" id="IPR015886">
    <property type="entry name" value="DNA_glyclase/AP_lyase_DNA-bd"/>
</dbReference>
<dbReference type="InterPro" id="IPR015887">
    <property type="entry name" value="DNA_glyclase_Znf_dom_DNA_BS"/>
</dbReference>
<dbReference type="InterPro" id="IPR020629">
    <property type="entry name" value="Formamido-pyr_DNA_Glyclase"/>
</dbReference>
<dbReference type="InterPro" id="IPR012319">
    <property type="entry name" value="FPG_cat"/>
</dbReference>
<dbReference type="InterPro" id="IPR035937">
    <property type="entry name" value="MutM-like_N-ter"/>
</dbReference>
<dbReference type="InterPro" id="IPR010979">
    <property type="entry name" value="Ribosomal_uS13-like_H2TH"/>
</dbReference>
<dbReference type="InterPro" id="IPR000214">
    <property type="entry name" value="Znf_DNA_glyclase/AP_lyase"/>
</dbReference>
<dbReference type="InterPro" id="IPR010663">
    <property type="entry name" value="Znf_FPG/IleRS"/>
</dbReference>
<dbReference type="NCBIfam" id="TIGR00577">
    <property type="entry name" value="fpg"/>
    <property type="match status" value="1"/>
</dbReference>
<dbReference type="NCBIfam" id="NF002211">
    <property type="entry name" value="PRK01103.1"/>
    <property type="match status" value="1"/>
</dbReference>
<dbReference type="NCBIfam" id="NF010551">
    <property type="entry name" value="PRK13945.1"/>
    <property type="match status" value="1"/>
</dbReference>
<dbReference type="PANTHER" id="PTHR22993">
    <property type="entry name" value="FORMAMIDOPYRIMIDINE-DNA GLYCOSYLASE"/>
    <property type="match status" value="1"/>
</dbReference>
<dbReference type="PANTHER" id="PTHR22993:SF9">
    <property type="entry name" value="FORMAMIDOPYRIMIDINE-DNA GLYCOSYLASE"/>
    <property type="match status" value="1"/>
</dbReference>
<dbReference type="Pfam" id="PF01149">
    <property type="entry name" value="Fapy_DNA_glyco"/>
    <property type="match status" value="1"/>
</dbReference>
<dbReference type="Pfam" id="PF06831">
    <property type="entry name" value="H2TH"/>
    <property type="match status" value="1"/>
</dbReference>
<dbReference type="Pfam" id="PF06827">
    <property type="entry name" value="zf-FPG_IleRS"/>
    <property type="match status" value="1"/>
</dbReference>
<dbReference type="SMART" id="SM00898">
    <property type="entry name" value="Fapy_DNA_glyco"/>
    <property type="match status" value="1"/>
</dbReference>
<dbReference type="SMART" id="SM01232">
    <property type="entry name" value="H2TH"/>
    <property type="match status" value="1"/>
</dbReference>
<dbReference type="SUPFAM" id="SSF57716">
    <property type="entry name" value="Glucocorticoid receptor-like (DNA-binding domain)"/>
    <property type="match status" value="1"/>
</dbReference>
<dbReference type="SUPFAM" id="SSF81624">
    <property type="entry name" value="N-terminal domain of MutM-like DNA repair proteins"/>
    <property type="match status" value="1"/>
</dbReference>
<dbReference type="SUPFAM" id="SSF46946">
    <property type="entry name" value="S13-like H2TH domain"/>
    <property type="match status" value="1"/>
</dbReference>
<dbReference type="PROSITE" id="PS51068">
    <property type="entry name" value="FPG_CAT"/>
    <property type="match status" value="1"/>
</dbReference>
<dbReference type="PROSITE" id="PS01242">
    <property type="entry name" value="ZF_FPG_1"/>
    <property type="match status" value="1"/>
</dbReference>
<dbReference type="PROSITE" id="PS51066">
    <property type="entry name" value="ZF_FPG_2"/>
    <property type="match status" value="1"/>
</dbReference>